<reference key="1">
    <citation type="journal article" date="1992" name="Proc. Natl. Acad. Sci. U.S.A.">
        <title>Molecular organization of Leishmania RNA virus 1.</title>
        <authorList>
            <person name="Stuart K.D."/>
            <person name="Weeks R."/>
            <person name="Guilbride L."/>
            <person name="Myler P.J."/>
        </authorList>
    </citation>
    <scope>NUCLEOTIDE SEQUENCE [GENOMIC RNA]</scope>
</reference>
<feature type="chain" id="PRO_0000404517" description="Probable RNA-directed RNA polymerase">
    <location>
        <begin position="1"/>
        <end position="874"/>
    </location>
</feature>
<gene>
    <name type="primary">ORF3</name>
</gene>
<accession>Q02382</accession>
<organismHost>
    <name type="scientific">Leishmania major</name>
    <dbReference type="NCBI Taxonomy" id="5664"/>
</organismHost>
<proteinExistence type="inferred from homology"/>
<dbReference type="EC" id="2.7.7.48"/>
<dbReference type="EMBL" id="M92355">
    <property type="protein sequence ID" value="AAB50024.1"/>
    <property type="molecule type" value="Genomic_RNA"/>
</dbReference>
<dbReference type="PIR" id="C46171">
    <property type="entry name" value="C46171"/>
</dbReference>
<dbReference type="RefSeq" id="NP_041191.1">
    <property type="nucleotide sequence ID" value="NC_002063.1"/>
</dbReference>
<dbReference type="KEGG" id="vg:1446405"/>
<dbReference type="OrthoDB" id="9167at10239"/>
<dbReference type="Proteomes" id="UP000006721">
    <property type="component" value="Genome"/>
</dbReference>
<dbReference type="GO" id="GO:0016787">
    <property type="term" value="F:hydrolase activity"/>
    <property type="evidence" value="ECO:0007669"/>
    <property type="project" value="UniProtKB-KW"/>
</dbReference>
<dbReference type="GO" id="GO:0000166">
    <property type="term" value="F:nucleotide binding"/>
    <property type="evidence" value="ECO:0007669"/>
    <property type="project" value="UniProtKB-KW"/>
</dbReference>
<dbReference type="GO" id="GO:0003723">
    <property type="term" value="F:RNA binding"/>
    <property type="evidence" value="ECO:0007669"/>
    <property type="project" value="UniProtKB-KW"/>
</dbReference>
<dbReference type="GO" id="GO:0003968">
    <property type="term" value="F:RNA-directed RNA polymerase activity"/>
    <property type="evidence" value="ECO:0007669"/>
    <property type="project" value="UniProtKB-KW"/>
</dbReference>
<dbReference type="GO" id="GO:0006351">
    <property type="term" value="P:DNA-templated transcription"/>
    <property type="evidence" value="ECO:0007669"/>
    <property type="project" value="InterPro"/>
</dbReference>
<dbReference type="InterPro" id="IPR043502">
    <property type="entry name" value="DNA/RNA_pol_sf"/>
</dbReference>
<dbReference type="InterPro" id="IPR001795">
    <property type="entry name" value="RNA-dir_pol_luteovirus"/>
</dbReference>
<dbReference type="Pfam" id="PF02123">
    <property type="entry name" value="RdRP_4"/>
    <property type="match status" value="1"/>
</dbReference>
<dbReference type="SUPFAM" id="SSF56672">
    <property type="entry name" value="DNA/RNA polymerases"/>
    <property type="match status" value="1"/>
</dbReference>
<protein>
    <recommendedName>
        <fullName>Probable RNA-directed RNA polymerase</fullName>
        <ecNumber>2.7.7.48</ecNumber>
    </recommendedName>
</protein>
<organism>
    <name type="scientific">Leishmania RNA virus 1 - 1 (isolate Leishmania guyanensis)</name>
    <name type="common">LRV-1-1</name>
    <dbReference type="NCBI Taxonomy" id="58103"/>
    <lineage>
        <taxon>Viruses</taxon>
        <taxon>Riboviria</taxon>
        <taxon>Orthornavirae</taxon>
        <taxon>Duplornaviricota</taxon>
        <taxon>Chrymotiviricetes</taxon>
        <taxon>Ghabrivirales</taxon>
        <taxon>Totiviridae</taxon>
        <taxon>Leishmaniavirus</taxon>
        <taxon>Leishmania RNA virus 1</taxon>
    </lineage>
</organism>
<evidence type="ECO:0000250" key="1"/>
<evidence type="ECO:0000305" key="2"/>
<name>RDRP_LRVLG</name>
<sequence length="874" mass="98321">MQCPNQNHMLVNRAMVVAALDSFEDARRIISGVLDLSRLTNTSVKGQHTNDTNYFSRYSNFFSQMPAIILNQLKCCIKAQVDDAVKMVLQKAKKVEVSKPVEKMLTFTTLNTYLGYPESTGCVMEYTEEQSGPIAAKLLITLLSSTLNAMVRPKSDPNISQNKIPRHYYQLKVHVGAQKKVNLTAIEVIRGCQHECSVVYCEFVRYSAYFAGLYDDQVAAILLYAVAAHNVQGFGARFCVLWALMCVRIAGFADDINIYIKHRGMSGLLPQLVEMKCLLGRGVNEIDVETEARRRLDVGSLSMQRLDENELRAAVRLIYSEELRRPVTYPLICDFWSSRWLWAANGSHSRALEHAHPELATRKEGQAYRKAVMEQWQHNPMDRWDGTVYVTPSAKLEHGKTRLLLACDTLSYMWFEYALRPVERIWENSNVILDPGSMGNCGIATRINGWRNGMPGQSFFAVDYDDFNSQHTLMSQKIVFEELFHHIGYNASWVKTLVDSFDSMELWIKGKCAGIMAGTLMSGHRATSFINSVLNRAYIICAGGHVPTSMHVGDDILMSCTLGHADNLIANLNRKGVRLNASKQVFSKTSGEFLRVAHREHTSHGYLARVISSAVSGNWVSDHTLNQQEALMNAIVCCRGILNRSLPGEKNPVVRVISRSVSKRTKIEEKTIRLLLSGRACLKGGVVYGEQTNYIQVYRINCRVERSEEKLPPYRHATEDYLNNHLADIEVMAVRQYGSDIADIMAQASWKKSMSTEGAEDVSRLSLQRDKTLPCLHCITEKETSLLPVRYGLFSSYPILMMLKDRIPIKEALKLAVTIGYRPQPNSDLELDLWGESNNSCAIEGVLPYNEATSLAQKLPCGGVVIQVIHNVYV</sequence>
<comment type="function">
    <text evidence="1">RNA-dependent RNA polymerase which replicates the viral genome. Catalyzes the transcription of fully conservative plus-strand genomic RNAs that are extruded from the virion into the cytoplasm where they function as mRNAs for translation of viral proteins and also as substrates for encapsidation to form new virions. Once encapsidated, the positive strand is converted to dsRNA by the RNA-directed RNA polymerase. Displays ssRNA-binding activity (By similarity).</text>
</comment>
<comment type="catalytic activity">
    <reaction>
        <text>RNA(n) + a ribonucleoside 5'-triphosphate = RNA(n+1) + diphosphate</text>
        <dbReference type="Rhea" id="RHEA:21248"/>
        <dbReference type="Rhea" id="RHEA-COMP:14527"/>
        <dbReference type="Rhea" id="RHEA-COMP:17342"/>
        <dbReference type="ChEBI" id="CHEBI:33019"/>
        <dbReference type="ChEBI" id="CHEBI:61557"/>
        <dbReference type="ChEBI" id="CHEBI:140395"/>
        <dbReference type="EC" id="2.7.7.48"/>
    </reaction>
</comment>
<comment type="similarity">
    <text evidence="2">Belongs to the totiviridae RNA-directed RNA polymerase family.</text>
</comment>
<keyword id="KW-0378">Hydrolase</keyword>
<keyword id="KW-0547">Nucleotide-binding</keyword>
<keyword id="KW-0548">Nucleotidyltransferase</keyword>
<keyword id="KW-1185">Reference proteome</keyword>
<keyword id="KW-0694">RNA-binding</keyword>
<keyword id="KW-0696">RNA-directed RNA polymerase</keyword>
<keyword id="KW-0808">Transferase</keyword>
<keyword id="KW-0693">Viral RNA replication</keyword>